<gene>
    <name type="primary">PDXK</name>
</gene>
<keyword id="KW-0007">Acetylation</keyword>
<keyword id="KW-0067">ATP-binding</keyword>
<keyword id="KW-0963">Cytoplasm</keyword>
<keyword id="KW-0418">Kinase</keyword>
<keyword id="KW-0460">Magnesium</keyword>
<keyword id="KW-0479">Metal-binding</keyword>
<keyword id="KW-0547">Nucleotide-binding</keyword>
<keyword id="KW-0597">Phosphoprotein</keyword>
<keyword id="KW-1185">Reference proteome</keyword>
<keyword id="KW-0915">Sodium</keyword>
<keyword id="KW-0808">Transferase</keyword>
<keyword id="KW-0862">Zinc</keyword>
<proteinExistence type="evidence at transcript level"/>
<comment type="function">
    <text evidence="1">Catalyzes the phosphorylation of the dietary vitamin B6 vitamers pyridoxal (PL), pyridoxine (PN) and pyridoxamine (PM) to form pyridoxal 5'-phosphate (PLP), pyridoxine 5'-phosphate (PNP) and pyridoxamine 5'-phosphate (PMP), respectively (By similarity). PLP is the active form of vitamin B6, and acts as a cofactor for over 140 different enzymatic reactions (By similarity).</text>
</comment>
<comment type="catalytic activity">
    <reaction evidence="1">
        <text>pyridoxal + ATP = pyridoxal 5'-phosphate + ADP + H(+)</text>
        <dbReference type="Rhea" id="RHEA:10224"/>
        <dbReference type="ChEBI" id="CHEBI:15378"/>
        <dbReference type="ChEBI" id="CHEBI:17310"/>
        <dbReference type="ChEBI" id="CHEBI:30616"/>
        <dbReference type="ChEBI" id="CHEBI:456216"/>
        <dbReference type="ChEBI" id="CHEBI:597326"/>
        <dbReference type="EC" id="2.7.1.35"/>
    </reaction>
    <physiologicalReaction direction="left-to-right" evidence="1">
        <dbReference type="Rhea" id="RHEA:10225"/>
    </physiologicalReaction>
</comment>
<comment type="catalytic activity">
    <reaction evidence="1">
        <text>pyridoxamine + ATP = pyridoxamine 5'-phosphate + ADP + H(+)</text>
        <dbReference type="Rhea" id="RHEA:25104"/>
        <dbReference type="ChEBI" id="CHEBI:15378"/>
        <dbReference type="ChEBI" id="CHEBI:30616"/>
        <dbReference type="ChEBI" id="CHEBI:57761"/>
        <dbReference type="ChEBI" id="CHEBI:58451"/>
        <dbReference type="ChEBI" id="CHEBI:456216"/>
        <dbReference type="EC" id="2.7.1.35"/>
    </reaction>
    <physiologicalReaction direction="left-to-right" evidence="1">
        <dbReference type="Rhea" id="RHEA:25105"/>
    </physiologicalReaction>
</comment>
<comment type="catalytic activity">
    <reaction evidence="1">
        <text>pyridoxine + ATP = pyridoxine 5'-phosphate + ADP + H(+)</text>
        <dbReference type="Rhea" id="RHEA:25108"/>
        <dbReference type="ChEBI" id="CHEBI:15378"/>
        <dbReference type="ChEBI" id="CHEBI:16709"/>
        <dbReference type="ChEBI" id="CHEBI:30616"/>
        <dbReference type="ChEBI" id="CHEBI:58589"/>
        <dbReference type="ChEBI" id="CHEBI:456216"/>
        <dbReference type="EC" id="2.7.1.35"/>
    </reaction>
    <physiologicalReaction direction="left-to-right" evidence="1">
        <dbReference type="Rhea" id="RHEA:25109"/>
    </physiologicalReaction>
</comment>
<comment type="cofactor">
    <cofactor evidence="2">
        <name>Zn(2+)</name>
        <dbReference type="ChEBI" id="CHEBI:29105"/>
    </cofactor>
    <cofactor evidence="1">
        <name>Mg(2+)</name>
        <dbReference type="ChEBI" id="CHEBI:18420"/>
    </cofactor>
</comment>
<comment type="activity regulation">
    <text evidence="1">Activity is increased in the presence of K(+)or Na(+).</text>
</comment>
<comment type="pathway">
    <text evidence="1">Cofactor metabolism; pyridoxal 5'-phosphate salvage; pyridoxal 5'-phosphate from pyridoxal: step 1/1.</text>
</comment>
<comment type="pathway">
    <text evidence="1">Cofactor metabolism; pyridoxal 5'-phosphate salvage; pyridoxine 5'-phosphate from pyridoxine: step 1/1.</text>
</comment>
<comment type="pathway">
    <text evidence="1">Cofactor metabolism; pyridoxal 5'-phosphate salvage; pyridoxamine 5'-phosphate from pyridoxamine: step 1/1.</text>
</comment>
<comment type="subunit">
    <text evidence="1">Homodimer.</text>
</comment>
<comment type="subcellular location">
    <subcellularLocation>
        <location evidence="1">Cytoplasm</location>
        <location evidence="1">Cytosol</location>
    </subcellularLocation>
</comment>
<comment type="similarity">
    <text evidence="3">Belongs to the pyridoxine kinase family.</text>
</comment>
<protein>
    <recommendedName>
        <fullName>Pyridoxal kinase</fullName>
        <ecNumber evidence="1">2.7.1.35</ecNumber>
    </recommendedName>
    <alternativeName>
        <fullName>Pyridoxine kinase</fullName>
    </alternativeName>
</protein>
<feature type="chain" id="PRO_0000268830" description="Pyridoxal kinase">
    <location>
        <begin position="1"/>
        <end position="312"/>
    </location>
</feature>
<feature type="active site" description="Proton acceptor" evidence="1">
    <location>
        <position position="235"/>
    </location>
</feature>
<feature type="binding site" evidence="1">
    <location>
        <position position="12"/>
    </location>
    <ligand>
        <name>pyridoxal</name>
        <dbReference type="ChEBI" id="CHEBI:17310"/>
    </ligand>
</feature>
<feature type="binding site" evidence="1">
    <location>
        <position position="47"/>
    </location>
    <ligand>
        <name>pyridoxal</name>
        <dbReference type="ChEBI" id="CHEBI:17310"/>
    </ligand>
</feature>
<feature type="binding site" evidence="1">
    <location>
        <position position="47"/>
    </location>
    <ligand>
        <name>pyridoxal 5'-phosphate</name>
        <dbReference type="ChEBI" id="CHEBI:597326"/>
    </ligand>
</feature>
<feature type="binding site" evidence="1">
    <location>
        <position position="113"/>
    </location>
    <ligand>
        <name>ATP</name>
        <dbReference type="ChEBI" id="CHEBI:30616"/>
    </ligand>
</feature>
<feature type="binding site" evidence="1">
    <location>
        <position position="113"/>
    </location>
    <ligand>
        <name>Na(+)</name>
        <dbReference type="ChEBI" id="CHEBI:29101"/>
    </ligand>
</feature>
<feature type="binding site" evidence="1">
    <location>
        <position position="118"/>
    </location>
    <ligand>
        <name>Mg(2+)</name>
        <dbReference type="ChEBI" id="CHEBI:18420"/>
    </ligand>
</feature>
<feature type="binding site" evidence="1">
    <location>
        <position position="148"/>
    </location>
    <ligand>
        <name>Na(+)</name>
        <dbReference type="ChEBI" id="CHEBI:29101"/>
    </ligand>
</feature>
<feature type="binding site" evidence="1">
    <location>
        <begin position="150"/>
        <end position="153"/>
    </location>
    <ligand>
        <name>ATP</name>
        <dbReference type="ChEBI" id="CHEBI:30616"/>
    </ligand>
</feature>
<feature type="binding site" evidence="1">
    <location>
        <begin position="186"/>
        <end position="187"/>
    </location>
    <ligand>
        <name>ATP</name>
        <dbReference type="ChEBI" id="CHEBI:30616"/>
    </ligand>
</feature>
<feature type="binding site" evidence="1">
    <location>
        <position position="186"/>
    </location>
    <ligand>
        <name>Na(+)</name>
        <dbReference type="ChEBI" id="CHEBI:29101"/>
    </ligand>
</feature>
<feature type="binding site" evidence="1">
    <location>
        <begin position="226"/>
        <end position="228"/>
    </location>
    <ligand>
        <name>ATP</name>
        <dbReference type="ChEBI" id="CHEBI:30616"/>
    </ligand>
</feature>
<feature type="binding site" evidence="1">
    <location>
        <position position="233"/>
    </location>
    <ligand>
        <name>ATP</name>
        <dbReference type="ChEBI" id="CHEBI:30616"/>
    </ligand>
</feature>
<feature type="binding site" evidence="1">
    <location>
        <begin position="234"/>
        <end position="235"/>
    </location>
    <ligand>
        <name>pyridoxal 5'-phosphate</name>
        <dbReference type="ChEBI" id="CHEBI:597326"/>
    </ligand>
</feature>
<feature type="modified residue" description="N-acetylmethionine" evidence="2">
    <location>
        <position position="1"/>
    </location>
</feature>
<feature type="modified residue" description="Phosphoserine" evidence="1">
    <location>
        <position position="59"/>
    </location>
</feature>
<feature type="modified residue" description="Phosphoserine" evidence="1">
    <location>
        <position position="213"/>
    </location>
</feature>
<feature type="modified residue" description="Phosphoserine" evidence="1">
    <location>
        <position position="285"/>
    </location>
</feature>
<organism>
    <name type="scientific">Bos taurus</name>
    <name type="common">Bovine</name>
    <dbReference type="NCBI Taxonomy" id="9913"/>
    <lineage>
        <taxon>Eukaryota</taxon>
        <taxon>Metazoa</taxon>
        <taxon>Chordata</taxon>
        <taxon>Craniata</taxon>
        <taxon>Vertebrata</taxon>
        <taxon>Euteleostomi</taxon>
        <taxon>Mammalia</taxon>
        <taxon>Eutheria</taxon>
        <taxon>Laurasiatheria</taxon>
        <taxon>Artiodactyla</taxon>
        <taxon>Ruminantia</taxon>
        <taxon>Pecora</taxon>
        <taxon>Bovidae</taxon>
        <taxon>Bovinae</taxon>
        <taxon>Bos</taxon>
    </lineage>
</organism>
<sequence length="312" mass="34817">MEEECRVLSIQSHVVRGYVGNRAATFPLQVLGFEVDAVNSVQFSNHTGYSHWKGQVLNSDELQELYDGLKLNSVNQYDYVLTGYTRDKSFLAMVVDIVQELKQQNPRLVYVCDPVMGDQRDGEGAMYVPDDLLPVYREKVVPVADIITPNQFEAELLTGRKIHTQEEALEVMDMLHSMGPDTVVITSSDLLSPRGSDYLMALGSQRTRAPDGSMVTQRIRMEMHKVDAVFVGTGDLFAAMLLAWTHKHPNNLKVACEKTVSAMHHVLQRTIKCAKAKSGEGVKPSPAQLELRMVQSKKDIESPEIVVQATVL</sequence>
<name>PDXK_BOVIN</name>
<evidence type="ECO:0000250" key="1">
    <source>
        <dbReference type="UniProtKB" id="O00764"/>
    </source>
</evidence>
<evidence type="ECO:0000250" key="2">
    <source>
        <dbReference type="UniProtKB" id="P82197"/>
    </source>
</evidence>
<evidence type="ECO:0000305" key="3"/>
<dbReference type="EC" id="2.7.1.35" evidence="1"/>
<dbReference type="EMBL" id="BC122793">
    <property type="protein sequence ID" value="AAI22794.1"/>
    <property type="molecule type" value="mRNA"/>
</dbReference>
<dbReference type="RefSeq" id="NP_001069119.1">
    <property type="nucleotide sequence ID" value="NM_001075651.2"/>
</dbReference>
<dbReference type="SMR" id="Q0II59"/>
<dbReference type="FunCoup" id="Q0II59">
    <property type="interactions" value="1966"/>
</dbReference>
<dbReference type="STRING" id="9913.ENSBTAP00000024203"/>
<dbReference type="PaxDb" id="9913-ENSBTAP00000024203"/>
<dbReference type="PeptideAtlas" id="Q0II59"/>
<dbReference type="Ensembl" id="ENSBTAT00000024203.7">
    <property type="protein sequence ID" value="ENSBTAP00000024203.5"/>
    <property type="gene ID" value="ENSBTAG00000018186.7"/>
</dbReference>
<dbReference type="GeneID" id="514168"/>
<dbReference type="KEGG" id="bta:514168"/>
<dbReference type="CTD" id="8566"/>
<dbReference type="VEuPathDB" id="HostDB:ENSBTAG00000018186"/>
<dbReference type="VGNC" id="VGNC:50243">
    <property type="gene designation" value="PDXK"/>
</dbReference>
<dbReference type="eggNOG" id="KOG2599">
    <property type="taxonomic scope" value="Eukaryota"/>
</dbReference>
<dbReference type="GeneTree" id="ENSGT00390000003874"/>
<dbReference type="HOGENOM" id="CLU_046496_1_1_1"/>
<dbReference type="InParanoid" id="Q0II59"/>
<dbReference type="OMA" id="HTQYGQW"/>
<dbReference type="OrthoDB" id="2104723at2759"/>
<dbReference type="TreeFam" id="TF315004"/>
<dbReference type="Reactome" id="R-BTA-6798695">
    <property type="pathway name" value="Neutrophil degranulation"/>
</dbReference>
<dbReference type="Reactome" id="R-BTA-964975">
    <property type="pathway name" value="Vitamin B6 activation to pyridoxal phosphate"/>
</dbReference>
<dbReference type="UniPathway" id="UPA01068">
    <property type="reaction ID" value="UER00298"/>
</dbReference>
<dbReference type="UniPathway" id="UPA01068">
    <property type="reaction ID" value="UER00299"/>
</dbReference>
<dbReference type="UniPathway" id="UPA01068">
    <property type="reaction ID" value="UER00300"/>
</dbReference>
<dbReference type="Proteomes" id="UP000009136">
    <property type="component" value="Chromosome 1"/>
</dbReference>
<dbReference type="Bgee" id="ENSBTAG00000018186">
    <property type="expression patterns" value="Expressed in parenchyma of mammary gland and 104 other cell types or tissues"/>
</dbReference>
<dbReference type="GO" id="GO:0005829">
    <property type="term" value="C:cytosol"/>
    <property type="evidence" value="ECO:0000318"/>
    <property type="project" value="GO_Central"/>
</dbReference>
<dbReference type="GO" id="GO:0005524">
    <property type="term" value="F:ATP binding"/>
    <property type="evidence" value="ECO:0007669"/>
    <property type="project" value="UniProtKB-KW"/>
</dbReference>
<dbReference type="GO" id="GO:0046872">
    <property type="term" value="F:metal ion binding"/>
    <property type="evidence" value="ECO:0007669"/>
    <property type="project" value="UniProtKB-KW"/>
</dbReference>
<dbReference type="GO" id="GO:0008478">
    <property type="term" value="F:pyridoxal kinase activity"/>
    <property type="evidence" value="ECO:0000318"/>
    <property type="project" value="GO_Central"/>
</dbReference>
<dbReference type="GO" id="GO:0009443">
    <property type="term" value="P:pyridoxal 5'-phosphate salvage"/>
    <property type="evidence" value="ECO:0000318"/>
    <property type="project" value="GO_Central"/>
</dbReference>
<dbReference type="CDD" id="cd01173">
    <property type="entry name" value="pyridoxal_pyridoxamine_kinase"/>
    <property type="match status" value="1"/>
</dbReference>
<dbReference type="FunFam" id="3.40.1190.20:FF:000007">
    <property type="entry name" value="Pyridoxal kinase"/>
    <property type="match status" value="1"/>
</dbReference>
<dbReference type="Gene3D" id="3.40.1190.20">
    <property type="match status" value="1"/>
</dbReference>
<dbReference type="InterPro" id="IPR013749">
    <property type="entry name" value="PM/HMP-P_kinase-1"/>
</dbReference>
<dbReference type="InterPro" id="IPR004625">
    <property type="entry name" value="PyrdxlKinase"/>
</dbReference>
<dbReference type="InterPro" id="IPR029056">
    <property type="entry name" value="Ribokinase-like"/>
</dbReference>
<dbReference type="NCBIfam" id="TIGR00687">
    <property type="entry name" value="pyridox_kin"/>
    <property type="match status" value="1"/>
</dbReference>
<dbReference type="PANTHER" id="PTHR10534">
    <property type="entry name" value="PYRIDOXAL KINASE"/>
    <property type="match status" value="1"/>
</dbReference>
<dbReference type="PANTHER" id="PTHR10534:SF2">
    <property type="entry name" value="PYRIDOXAL KINASE"/>
    <property type="match status" value="1"/>
</dbReference>
<dbReference type="Pfam" id="PF08543">
    <property type="entry name" value="Phos_pyr_kin"/>
    <property type="match status" value="1"/>
</dbReference>
<dbReference type="SUPFAM" id="SSF53613">
    <property type="entry name" value="Ribokinase-like"/>
    <property type="match status" value="1"/>
</dbReference>
<accession>Q0II59</accession>
<reference key="1">
    <citation type="submission" date="2006-08" db="EMBL/GenBank/DDBJ databases">
        <authorList>
            <consortium name="NIH - Mammalian Gene Collection (MGC) project"/>
        </authorList>
    </citation>
    <scope>NUCLEOTIDE SEQUENCE [LARGE SCALE MRNA]</scope>
    <source>
        <strain>Hereford</strain>
        <tissue>Hypothalamus</tissue>
    </source>
</reference>